<reference key="1">
    <citation type="journal article" date="2009" name="BMC Genomics">
        <title>Pseudogene accumulation in the evolutionary histories of Salmonella enterica serovars Paratyphi A and Typhi.</title>
        <authorList>
            <person name="Holt K.E."/>
            <person name="Thomson N.R."/>
            <person name="Wain J."/>
            <person name="Langridge G.C."/>
            <person name="Hasan R."/>
            <person name="Bhutta Z.A."/>
            <person name="Quail M.A."/>
            <person name="Norbertczak H."/>
            <person name="Walker D."/>
            <person name="Simmonds M."/>
            <person name="White B."/>
            <person name="Bason N."/>
            <person name="Mungall K."/>
            <person name="Dougan G."/>
            <person name="Parkhill J."/>
        </authorList>
    </citation>
    <scope>NUCLEOTIDE SEQUENCE [LARGE SCALE GENOMIC DNA]</scope>
    <source>
        <strain>AKU_12601</strain>
    </source>
</reference>
<accession>B5BBD9</accession>
<organism>
    <name type="scientific">Salmonella paratyphi A (strain AKU_12601)</name>
    <dbReference type="NCBI Taxonomy" id="554290"/>
    <lineage>
        <taxon>Bacteria</taxon>
        <taxon>Pseudomonadati</taxon>
        <taxon>Pseudomonadota</taxon>
        <taxon>Gammaproteobacteria</taxon>
        <taxon>Enterobacterales</taxon>
        <taxon>Enterobacteriaceae</taxon>
        <taxon>Salmonella</taxon>
    </lineage>
</organism>
<feature type="signal peptide" evidence="1">
    <location>
        <begin position="1"/>
        <end position="22"/>
    </location>
</feature>
<feature type="chain" id="PRO_1000136618" description="Glucans biosynthesis protein G">
    <location>
        <begin position="23"/>
        <end position="511"/>
    </location>
</feature>
<comment type="function">
    <text evidence="1">Involved in the biosynthesis of osmoregulated periplasmic glucans (OPGs).</text>
</comment>
<comment type="pathway">
    <text evidence="1">Glycan metabolism; osmoregulated periplasmic glucan (OPG) biosynthesis.</text>
</comment>
<comment type="subcellular location">
    <subcellularLocation>
        <location evidence="1">Periplasm</location>
    </subcellularLocation>
</comment>
<comment type="similarity">
    <text evidence="1">Belongs to the OpgD/OpgG family.</text>
</comment>
<protein>
    <recommendedName>
        <fullName evidence="1">Glucans biosynthesis protein G</fullName>
    </recommendedName>
</protein>
<dbReference type="EMBL" id="FM200053">
    <property type="protein sequence ID" value="CAR59768.1"/>
    <property type="molecule type" value="Genomic_DNA"/>
</dbReference>
<dbReference type="RefSeq" id="WP_011233079.1">
    <property type="nucleotide sequence ID" value="NC_011147.1"/>
</dbReference>
<dbReference type="SMR" id="B5BBD9"/>
<dbReference type="KEGG" id="sek:SSPA1582"/>
<dbReference type="HOGENOM" id="CLU_023403_2_0_6"/>
<dbReference type="UniPathway" id="UPA00637"/>
<dbReference type="Proteomes" id="UP000001869">
    <property type="component" value="Chromosome"/>
</dbReference>
<dbReference type="GO" id="GO:0030288">
    <property type="term" value="C:outer membrane-bounded periplasmic space"/>
    <property type="evidence" value="ECO:0007669"/>
    <property type="project" value="TreeGrafter"/>
</dbReference>
<dbReference type="GO" id="GO:0030246">
    <property type="term" value="F:carbohydrate binding"/>
    <property type="evidence" value="ECO:0007669"/>
    <property type="project" value="InterPro"/>
</dbReference>
<dbReference type="GO" id="GO:0003824">
    <property type="term" value="F:catalytic activity"/>
    <property type="evidence" value="ECO:0007669"/>
    <property type="project" value="InterPro"/>
</dbReference>
<dbReference type="GO" id="GO:0051274">
    <property type="term" value="P:beta-glucan biosynthetic process"/>
    <property type="evidence" value="ECO:0007669"/>
    <property type="project" value="TreeGrafter"/>
</dbReference>
<dbReference type="FunFam" id="2.60.40.10:FF:000294">
    <property type="entry name" value="Glucans biosynthesis protein G"/>
    <property type="match status" value="1"/>
</dbReference>
<dbReference type="FunFam" id="2.70.98.10:FF:000001">
    <property type="entry name" value="Glucans biosynthesis protein G"/>
    <property type="match status" value="1"/>
</dbReference>
<dbReference type="Gene3D" id="2.70.98.10">
    <property type="match status" value="1"/>
</dbReference>
<dbReference type="Gene3D" id="2.60.40.10">
    <property type="entry name" value="Immunoglobulins"/>
    <property type="match status" value="1"/>
</dbReference>
<dbReference type="HAMAP" id="MF_01069">
    <property type="entry name" value="MdoG_OpgG"/>
    <property type="match status" value="1"/>
</dbReference>
<dbReference type="InterPro" id="IPR011013">
    <property type="entry name" value="Gal_mutarotase_sf_dom"/>
</dbReference>
<dbReference type="InterPro" id="IPR014718">
    <property type="entry name" value="GH-type_carb-bd"/>
</dbReference>
<dbReference type="InterPro" id="IPR014438">
    <property type="entry name" value="Glucan_biosyn_MdoG/MdoD"/>
</dbReference>
<dbReference type="InterPro" id="IPR007444">
    <property type="entry name" value="Glucan_biosyn_MdoG_C"/>
</dbReference>
<dbReference type="InterPro" id="IPR013783">
    <property type="entry name" value="Ig-like_fold"/>
</dbReference>
<dbReference type="InterPro" id="IPR014756">
    <property type="entry name" value="Ig_E-set"/>
</dbReference>
<dbReference type="InterPro" id="IPR023704">
    <property type="entry name" value="MdoG_OpgG"/>
</dbReference>
<dbReference type="PANTHER" id="PTHR30504">
    <property type="entry name" value="GLUCANS BIOSYNTHESIS PROTEIN"/>
    <property type="match status" value="1"/>
</dbReference>
<dbReference type="PANTHER" id="PTHR30504:SF4">
    <property type="entry name" value="GLUCANS BIOSYNTHESIS PROTEIN G"/>
    <property type="match status" value="1"/>
</dbReference>
<dbReference type="Pfam" id="PF04349">
    <property type="entry name" value="MdoG"/>
    <property type="match status" value="1"/>
</dbReference>
<dbReference type="PIRSF" id="PIRSF006281">
    <property type="entry name" value="MdoG"/>
    <property type="match status" value="1"/>
</dbReference>
<dbReference type="SUPFAM" id="SSF81296">
    <property type="entry name" value="E set domains"/>
    <property type="match status" value="1"/>
</dbReference>
<dbReference type="SUPFAM" id="SSF74650">
    <property type="entry name" value="Galactose mutarotase-like"/>
    <property type="match status" value="1"/>
</dbReference>
<gene>
    <name evidence="1" type="primary">mdoG</name>
    <name evidence="1" type="synonym">opgG</name>
    <name type="ordered locus">SSPA1582</name>
</gene>
<proteinExistence type="inferred from homology"/>
<evidence type="ECO:0000255" key="1">
    <source>
        <dbReference type="HAMAP-Rule" id="MF_01069"/>
    </source>
</evidence>
<keyword id="KW-0574">Periplasm</keyword>
<keyword id="KW-0732">Signal</keyword>
<name>OPGG_SALPK</name>
<sequence length="511" mass="57861">MMKMRWLGAAIMLTLYASSSWAFSIDDVAKQAQSLAGKGYEAPKSNLPSVFRDMKYADYQQIQFNSDKAYWNNLKTPFKLEFYHQGMYFDTLVKINEVTATTVKRIKYSPDYFNFGNVQHDKDTVKDLGFAGFKVLYPINSKDKNDEIVSMLGASYFRVIGAGQVYGLSARGLAIDTALPSGEEFPRFREFWIERPKPTDKRLTVYALLDSPRATGAYRFVIIPGRDTVVDVQSKVYLRDKVGKLGVAPLTSMFLFGPNQPSPTTNYRPELHDSNGLSIHAGNGEWIWRPLNNPKHLAVSSYAMENPQGFGLLQRGREFSRFEDLDDRYDLRPSAWITPKGDWGKGKVELVEIPTNDETNDNIVAYWTPDQLPEPGKEMNFKYTLTFSRDEDKLHAPDNAWVLQTRRSTGDVKQSNLIRQPDGTIAFVVDFVGADMKKLPPDTPVAAQTSIGDNGEIVDSNVRYNPVTKGWRLMLRVKVKDAKKTTEMRAALVNADQTLSETWSYQLPANE</sequence>